<gene>
    <name evidence="1" type="primary">rpmD</name>
    <name type="ordered locus">Caul_1632</name>
</gene>
<reference key="1">
    <citation type="submission" date="2008-01" db="EMBL/GenBank/DDBJ databases">
        <title>Complete sequence of chromosome of Caulobacter sp. K31.</title>
        <authorList>
            <consortium name="US DOE Joint Genome Institute"/>
            <person name="Copeland A."/>
            <person name="Lucas S."/>
            <person name="Lapidus A."/>
            <person name="Barry K."/>
            <person name="Glavina del Rio T."/>
            <person name="Dalin E."/>
            <person name="Tice H."/>
            <person name="Pitluck S."/>
            <person name="Bruce D."/>
            <person name="Goodwin L."/>
            <person name="Thompson L.S."/>
            <person name="Brettin T."/>
            <person name="Detter J.C."/>
            <person name="Han C."/>
            <person name="Schmutz J."/>
            <person name="Larimer F."/>
            <person name="Land M."/>
            <person name="Hauser L."/>
            <person name="Kyrpides N."/>
            <person name="Kim E."/>
            <person name="Stephens C."/>
            <person name="Richardson P."/>
        </authorList>
    </citation>
    <scope>NUCLEOTIDE SEQUENCE [LARGE SCALE GENOMIC DNA]</scope>
    <source>
        <strain>K31</strain>
    </source>
</reference>
<accession>B0T2E0</accession>
<feature type="chain" id="PRO_0000347091" description="Large ribosomal subunit protein uL30">
    <location>
        <begin position="1"/>
        <end position="63"/>
    </location>
</feature>
<comment type="subunit">
    <text evidence="1">Part of the 50S ribosomal subunit.</text>
</comment>
<comment type="similarity">
    <text evidence="1">Belongs to the universal ribosomal protein uL30 family.</text>
</comment>
<proteinExistence type="inferred from homology"/>
<keyword id="KW-0687">Ribonucleoprotein</keyword>
<keyword id="KW-0689">Ribosomal protein</keyword>
<sequence length="63" mass="6927">MATATTKTVKVRQTGSPIRRNAVQRATLAGLGLNKLGRESELEDTPSVRGMIRKVQHLLEIVE</sequence>
<dbReference type="EMBL" id="CP000927">
    <property type="protein sequence ID" value="ABZ70761.1"/>
    <property type="molecule type" value="Genomic_DNA"/>
</dbReference>
<dbReference type="SMR" id="B0T2E0"/>
<dbReference type="STRING" id="366602.Caul_1632"/>
<dbReference type="KEGG" id="cak:Caul_1632"/>
<dbReference type="eggNOG" id="COG1841">
    <property type="taxonomic scope" value="Bacteria"/>
</dbReference>
<dbReference type="HOGENOM" id="CLU_131047_1_2_5"/>
<dbReference type="OrthoDB" id="9812790at2"/>
<dbReference type="GO" id="GO:0015934">
    <property type="term" value="C:large ribosomal subunit"/>
    <property type="evidence" value="ECO:0007669"/>
    <property type="project" value="InterPro"/>
</dbReference>
<dbReference type="GO" id="GO:0003735">
    <property type="term" value="F:structural constituent of ribosome"/>
    <property type="evidence" value="ECO:0007669"/>
    <property type="project" value="InterPro"/>
</dbReference>
<dbReference type="GO" id="GO:0006412">
    <property type="term" value="P:translation"/>
    <property type="evidence" value="ECO:0007669"/>
    <property type="project" value="UniProtKB-UniRule"/>
</dbReference>
<dbReference type="CDD" id="cd01658">
    <property type="entry name" value="Ribosomal_L30"/>
    <property type="match status" value="1"/>
</dbReference>
<dbReference type="Gene3D" id="3.30.1390.20">
    <property type="entry name" value="Ribosomal protein L30, ferredoxin-like fold domain"/>
    <property type="match status" value="1"/>
</dbReference>
<dbReference type="HAMAP" id="MF_01371_B">
    <property type="entry name" value="Ribosomal_uL30_B"/>
    <property type="match status" value="1"/>
</dbReference>
<dbReference type="InterPro" id="IPR036919">
    <property type="entry name" value="Ribo_uL30_ferredoxin-like_sf"/>
</dbReference>
<dbReference type="InterPro" id="IPR005996">
    <property type="entry name" value="Ribosomal_uL30_bac-type"/>
</dbReference>
<dbReference type="InterPro" id="IPR016082">
    <property type="entry name" value="Ribosomal_uL30_ferredoxin-like"/>
</dbReference>
<dbReference type="NCBIfam" id="TIGR01308">
    <property type="entry name" value="rpmD_bact"/>
    <property type="match status" value="1"/>
</dbReference>
<dbReference type="Pfam" id="PF00327">
    <property type="entry name" value="Ribosomal_L30"/>
    <property type="match status" value="1"/>
</dbReference>
<dbReference type="PIRSF" id="PIRSF002211">
    <property type="entry name" value="Ribosomal_L30_bac-type"/>
    <property type="match status" value="1"/>
</dbReference>
<dbReference type="SUPFAM" id="SSF55129">
    <property type="entry name" value="Ribosomal protein L30p/L7e"/>
    <property type="match status" value="1"/>
</dbReference>
<name>RL30_CAUSK</name>
<protein>
    <recommendedName>
        <fullName evidence="1">Large ribosomal subunit protein uL30</fullName>
    </recommendedName>
    <alternativeName>
        <fullName evidence="2">50S ribosomal protein L30</fullName>
    </alternativeName>
</protein>
<organism>
    <name type="scientific">Caulobacter sp. (strain K31)</name>
    <dbReference type="NCBI Taxonomy" id="366602"/>
    <lineage>
        <taxon>Bacteria</taxon>
        <taxon>Pseudomonadati</taxon>
        <taxon>Pseudomonadota</taxon>
        <taxon>Alphaproteobacteria</taxon>
        <taxon>Caulobacterales</taxon>
        <taxon>Caulobacteraceae</taxon>
        <taxon>Caulobacter</taxon>
    </lineage>
</organism>
<evidence type="ECO:0000255" key="1">
    <source>
        <dbReference type="HAMAP-Rule" id="MF_01371"/>
    </source>
</evidence>
<evidence type="ECO:0000305" key="2"/>